<feature type="chain" id="PRO_0000079628" description="46 kDa cell wall protein">
    <location>
        <begin position="1"/>
        <end position="15" status="greater than"/>
    </location>
</feature>
<feature type="non-terminal residue" evidence="2">
    <location>
        <position position="15"/>
    </location>
</feature>
<keyword id="KW-0134">Cell wall</keyword>
<keyword id="KW-0903">Direct protein sequencing</keyword>
<keyword id="KW-0964">Secreted</keyword>
<comment type="subcellular location">
    <subcellularLocation>
        <location evidence="1">Secreted</location>
        <location evidence="1">Cell wall</location>
    </subcellularLocation>
</comment>
<dbReference type="GO" id="GO:0005576">
    <property type="term" value="C:extracellular region"/>
    <property type="evidence" value="ECO:0007669"/>
    <property type="project" value="UniProtKB-KW"/>
</dbReference>
<sequence>DLSNLLSRVPNERSN</sequence>
<organism>
    <name type="scientific">Daucus carota</name>
    <name type="common">Wild carrot</name>
    <dbReference type="NCBI Taxonomy" id="4039"/>
    <lineage>
        <taxon>Eukaryota</taxon>
        <taxon>Viridiplantae</taxon>
        <taxon>Streptophyta</taxon>
        <taxon>Embryophyta</taxon>
        <taxon>Tracheophyta</taxon>
        <taxon>Spermatophyta</taxon>
        <taxon>Magnoliopsida</taxon>
        <taxon>eudicotyledons</taxon>
        <taxon>Gunneridae</taxon>
        <taxon>Pentapetalae</taxon>
        <taxon>asterids</taxon>
        <taxon>campanulids</taxon>
        <taxon>Apiales</taxon>
        <taxon>Apiaceae</taxon>
        <taxon>Apioideae</taxon>
        <taxon>Scandiceae</taxon>
        <taxon>Daucinae</taxon>
        <taxon>Daucus</taxon>
        <taxon>Daucus sect. Daucus</taxon>
    </lineage>
</organism>
<protein>
    <recommendedName>
        <fullName>46 kDa cell wall protein</fullName>
    </recommendedName>
</protein>
<accession>P80753</accession>
<evidence type="ECO:0000269" key="1">
    <source>
    </source>
</evidence>
<evidence type="ECO:0000303" key="2">
    <source>
    </source>
</evidence>
<evidence type="ECO:0000305" key="3"/>
<reference evidence="3" key="1">
    <citation type="journal article" date="1997" name="J. Biol. Chem.">
        <title>Differential extraction and protein sequencing reveals major differences in patterns of primary cell wall proteins from plants.</title>
        <authorList>
            <person name="Robertson D."/>
            <person name="Mitchell G.P."/>
            <person name="Gilroy J.S."/>
            <person name="Gerrish C."/>
            <person name="Bolwell G.P."/>
            <person name="Slabas A.R."/>
        </authorList>
    </citation>
    <scope>PROTEIN SEQUENCE</scope>
    <scope>SUBCELLULAR LOCATION</scope>
</reference>
<name>CWP03_DAUCA</name>
<proteinExistence type="evidence at protein level"/>